<feature type="chain" id="PRO_1000051249" description="Small ribosomal subunit protein uS9">
    <location>
        <begin position="1"/>
        <end position="131"/>
    </location>
</feature>
<comment type="similarity">
    <text evidence="1">Belongs to the universal ribosomal protein uS9 family.</text>
</comment>
<dbReference type="EMBL" id="AE016827">
    <property type="protein sequence ID" value="AAU37889.1"/>
    <property type="molecule type" value="Genomic_DNA"/>
</dbReference>
<dbReference type="RefSeq" id="WP_011200456.1">
    <property type="nucleotide sequence ID" value="NC_006300.1"/>
</dbReference>
<dbReference type="SMR" id="Q65T21"/>
<dbReference type="STRING" id="221988.MS1282"/>
<dbReference type="KEGG" id="msu:MS1282"/>
<dbReference type="eggNOG" id="COG0103">
    <property type="taxonomic scope" value="Bacteria"/>
</dbReference>
<dbReference type="HOGENOM" id="CLU_046483_2_1_6"/>
<dbReference type="OrthoDB" id="9803965at2"/>
<dbReference type="Proteomes" id="UP000000607">
    <property type="component" value="Chromosome"/>
</dbReference>
<dbReference type="GO" id="GO:0022627">
    <property type="term" value="C:cytosolic small ribosomal subunit"/>
    <property type="evidence" value="ECO:0007669"/>
    <property type="project" value="TreeGrafter"/>
</dbReference>
<dbReference type="GO" id="GO:0003723">
    <property type="term" value="F:RNA binding"/>
    <property type="evidence" value="ECO:0007669"/>
    <property type="project" value="TreeGrafter"/>
</dbReference>
<dbReference type="GO" id="GO:0003735">
    <property type="term" value="F:structural constituent of ribosome"/>
    <property type="evidence" value="ECO:0007669"/>
    <property type="project" value="InterPro"/>
</dbReference>
<dbReference type="GO" id="GO:0006412">
    <property type="term" value="P:translation"/>
    <property type="evidence" value="ECO:0007669"/>
    <property type="project" value="UniProtKB-UniRule"/>
</dbReference>
<dbReference type="FunFam" id="3.30.230.10:FF:000001">
    <property type="entry name" value="30S ribosomal protein S9"/>
    <property type="match status" value="1"/>
</dbReference>
<dbReference type="Gene3D" id="3.30.230.10">
    <property type="match status" value="1"/>
</dbReference>
<dbReference type="HAMAP" id="MF_00532_B">
    <property type="entry name" value="Ribosomal_uS9_B"/>
    <property type="match status" value="1"/>
</dbReference>
<dbReference type="InterPro" id="IPR020568">
    <property type="entry name" value="Ribosomal_Su5_D2-typ_SF"/>
</dbReference>
<dbReference type="InterPro" id="IPR000754">
    <property type="entry name" value="Ribosomal_uS9"/>
</dbReference>
<dbReference type="InterPro" id="IPR023035">
    <property type="entry name" value="Ribosomal_uS9_bac/plastid"/>
</dbReference>
<dbReference type="InterPro" id="IPR020574">
    <property type="entry name" value="Ribosomal_uS9_CS"/>
</dbReference>
<dbReference type="InterPro" id="IPR014721">
    <property type="entry name" value="Ribsml_uS5_D2-typ_fold_subgr"/>
</dbReference>
<dbReference type="NCBIfam" id="NF001099">
    <property type="entry name" value="PRK00132.1"/>
    <property type="match status" value="1"/>
</dbReference>
<dbReference type="PANTHER" id="PTHR21569">
    <property type="entry name" value="RIBOSOMAL PROTEIN S9"/>
    <property type="match status" value="1"/>
</dbReference>
<dbReference type="PANTHER" id="PTHR21569:SF1">
    <property type="entry name" value="SMALL RIBOSOMAL SUBUNIT PROTEIN US9M"/>
    <property type="match status" value="1"/>
</dbReference>
<dbReference type="Pfam" id="PF00380">
    <property type="entry name" value="Ribosomal_S9"/>
    <property type="match status" value="1"/>
</dbReference>
<dbReference type="SUPFAM" id="SSF54211">
    <property type="entry name" value="Ribosomal protein S5 domain 2-like"/>
    <property type="match status" value="1"/>
</dbReference>
<dbReference type="PROSITE" id="PS00360">
    <property type="entry name" value="RIBOSOMAL_S9"/>
    <property type="match status" value="1"/>
</dbReference>
<name>RS9_MANSM</name>
<accession>Q65T21</accession>
<reference key="1">
    <citation type="journal article" date="2004" name="Nat. Biotechnol.">
        <title>The genome sequence of the capnophilic rumen bacterium Mannheimia succiniciproducens.</title>
        <authorList>
            <person name="Hong S.H."/>
            <person name="Kim J.S."/>
            <person name="Lee S.Y."/>
            <person name="In Y.H."/>
            <person name="Choi S.S."/>
            <person name="Rih J.-K."/>
            <person name="Kim C.H."/>
            <person name="Jeong H."/>
            <person name="Hur C.G."/>
            <person name="Kim J.J."/>
        </authorList>
    </citation>
    <scope>NUCLEOTIDE SEQUENCE [LARGE SCALE GENOMIC DNA]</scope>
    <source>
        <strain>KCTC 0769BP / MBEL55E</strain>
    </source>
</reference>
<evidence type="ECO:0000255" key="1">
    <source>
        <dbReference type="HAMAP-Rule" id="MF_00532"/>
    </source>
</evidence>
<evidence type="ECO:0000305" key="2"/>
<gene>
    <name evidence="1" type="primary">rpsI</name>
    <name type="ordered locus">MS1282</name>
</gene>
<sequence>MTAANQNYGTGRRKSSSARVFIKPGSGKITINQRELDVYFGRETSRMIVRQPLELVEMTEKLDLYITVKGGGISGQAGAIRHGITRALMEYDESLRPVLRAAGFVTRDARRVERKKVGLRKARRRPQFSKR</sequence>
<organism>
    <name type="scientific">Mannheimia succiniciproducens (strain KCTC 0769BP / MBEL55E)</name>
    <dbReference type="NCBI Taxonomy" id="221988"/>
    <lineage>
        <taxon>Bacteria</taxon>
        <taxon>Pseudomonadati</taxon>
        <taxon>Pseudomonadota</taxon>
        <taxon>Gammaproteobacteria</taxon>
        <taxon>Pasteurellales</taxon>
        <taxon>Pasteurellaceae</taxon>
        <taxon>Basfia</taxon>
    </lineage>
</organism>
<protein>
    <recommendedName>
        <fullName evidence="1">Small ribosomal subunit protein uS9</fullName>
    </recommendedName>
    <alternativeName>
        <fullName evidence="2">30S ribosomal protein S9</fullName>
    </alternativeName>
</protein>
<proteinExistence type="inferred from homology"/>
<keyword id="KW-0687">Ribonucleoprotein</keyword>
<keyword id="KW-0689">Ribosomal protein</keyword>